<accession>Q8AIH5</accession>
<protein>
    <recommendedName>
        <fullName>Envelope glycoprotein gp160</fullName>
    </recommendedName>
    <alternativeName>
        <fullName>Env polyprotein</fullName>
    </alternativeName>
    <component>
        <recommendedName>
            <fullName>Surface protein gp120</fullName>
            <shortName>SU</shortName>
        </recommendedName>
        <alternativeName>
            <fullName>Glycoprotein 120</fullName>
            <shortName>gp120</shortName>
        </alternativeName>
    </component>
    <component>
        <recommendedName>
            <fullName>Transmembrane protein gp41</fullName>
            <shortName>TM</shortName>
        </recommendedName>
        <alternativeName>
            <fullName>Glycoprotein 32</fullName>
            <shortName>gp32</shortName>
        </alternativeName>
    </component>
</protein>
<name>ENV_SIVTN</name>
<keyword id="KW-0053">Apoptosis</keyword>
<keyword id="KW-0165">Cleavage on pair of basic residues</keyword>
<keyword id="KW-0175">Coiled coil</keyword>
<keyword id="KW-1015">Disulfide bond</keyword>
<keyword id="KW-1168">Fusion of virus membrane with host membrane</keyword>
<keyword id="KW-0325">Glycoprotein</keyword>
<keyword id="KW-1032">Host cell membrane</keyword>
<keyword id="KW-1039">Host endosome</keyword>
<keyword id="KW-1043">Host membrane</keyword>
<keyword id="KW-0945">Host-virus interaction</keyword>
<keyword id="KW-0472">Membrane</keyword>
<keyword id="KW-1185">Reference proteome</keyword>
<keyword id="KW-0732">Signal</keyword>
<keyword id="KW-0812">Transmembrane</keyword>
<keyword id="KW-1133">Transmembrane helix</keyword>
<keyword id="KW-1161">Viral attachment to host cell</keyword>
<keyword id="KW-0261">Viral envelope protein</keyword>
<keyword id="KW-1162">Viral penetration into host cytoplasm</keyword>
<keyword id="KW-0946">Virion</keyword>
<keyword id="KW-1160">Virus entry into host cell</keyword>
<feature type="signal peptide" evidence="2">
    <location>
        <begin position="1"/>
        <end position="21"/>
    </location>
</feature>
<feature type="chain" id="PRO_0000249354" description="Envelope glycoprotein gp160">
    <location>
        <begin position="22"/>
        <end position="871"/>
    </location>
</feature>
<feature type="chain" id="PRO_0000249355" description="Surface protein gp120" evidence="1">
    <location>
        <begin position="31"/>
        <end position="502"/>
    </location>
</feature>
<feature type="chain" id="PRO_0000249356" description="Transmembrane protein gp41" evidence="1">
    <location>
        <begin position="503"/>
        <end position="871"/>
    </location>
</feature>
<feature type="topological domain" description="Extracellular" evidence="2">
    <location>
        <begin position="22"/>
        <end position="684"/>
    </location>
</feature>
<feature type="transmembrane region" description="Helical" evidence="2">
    <location>
        <begin position="685"/>
        <end position="705"/>
    </location>
</feature>
<feature type="topological domain" description="Cytoplasmic" evidence="2">
    <location>
        <begin position="706"/>
        <end position="871"/>
    </location>
</feature>
<feature type="region of interest" description="V1" evidence="1">
    <location>
        <begin position="120"/>
        <end position="153"/>
    </location>
</feature>
<feature type="region of interest" description="V2" evidence="1">
    <location>
        <begin position="154"/>
        <end position="193"/>
    </location>
</feature>
<feature type="region of interest" description="V3" evidence="1">
    <location>
        <begin position="292"/>
        <end position="325"/>
    </location>
</feature>
<feature type="region of interest" description="V4" evidence="1">
    <location>
        <begin position="383"/>
        <end position="408"/>
    </location>
</feature>
<feature type="region of interest" description="V5" evidence="1">
    <location>
        <begin position="451"/>
        <end position="458"/>
    </location>
</feature>
<feature type="region of interest" description="Fusion peptide" evidence="2">
    <location>
        <begin position="502"/>
        <end position="522"/>
    </location>
</feature>
<feature type="region of interest" description="Immunosuppression" evidence="1">
    <location>
        <begin position="567"/>
        <end position="583"/>
    </location>
</feature>
<feature type="region of interest" description="MPER; binding to GalCer" evidence="1">
    <location>
        <begin position="663"/>
        <end position="684"/>
    </location>
</feature>
<feature type="coiled-coil region" evidence="2">
    <location>
        <begin position="645"/>
        <end position="668"/>
    </location>
</feature>
<feature type="short sequence motif" description="YXXL motif; contains endocytosis signal" evidence="1">
    <location>
        <begin position="713"/>
        <end position="716"/>
    </location>
</feature>
<feature type="site" description="Cleavage; by host furin" evidence="1">
    <location>
        <begin position="502"/>
        <end position="503"/>
    </location>
</feature>
<feature type="glycosylation site" description="N-linked (GlcNAc...) asparagine; by host" evidence="2">
    <location>
        <position position="77"/>
    </location>
</feature>
<feature type="glycosylation site" description="N-linked (GlcNAc...) asparagine; by host" evidence="2">
    <location>
        <position position="124"/>
    </location>
</feature>
<feature type="glycosylation site" description="N-linked (GlcNAc...) asparagine; by host" evidence="2">
    <location>
        <position position="127"/>
    </location>
</feature>
<feature type="glycosylation site" description="N-linked (GlcNAc...) asparagine; by host" evidence="2">
    <location>
        <position position="142"/>
    </location>
</feature>
<feature type="glycosylation site" description="N-linked (GlcNAc...) asparagine; by host" evidence="2">
    <location>
        <position position="153"/>
    </location>
</feature>
<feature type="glycosylation site" description="N-linked (GlcNAc...) asparagine; by host" evidence="2">
    <location>
        <position position="157"/>
    </location>
</feature>
<feature type="glycosylation site" description="N-linked (GlcNAc...) asparagine; by host" evidence="2">
    <location>
        <position position="185"/>
    </location>
</feature>
<feature type="glycosylation site" description="N-linked (GlcNAc...) asparagine; by host" evidence="2">
    <location>
        <position position="194"/>
    </location>
</feature>
<feature type="glycosylation site" description="N-linked (GlcNAc...) asparagine; by host" evidence="2">
    <location>
        <position position="229"/>
    </location>
</feature>
<feature type="glycosylation site" description="N-linked (GlcNAc...) asparagine; by host" evidence="2">
    <location>
        <position position="238"/>
    </location>
</feature>
<feature type="glycosylation site" description="N-linked (GlcNAc...) asparagine; by host" evidence="2">
    <location>
        <position position="259"/>
    </location>
</feature>
<feature type="glycosylation site" description="N-linked (GlcNAc...) asparagine; by host" evidence="2">
    <location>
        <position position="273"/>
    </location>
</feature>
<feature type="glycosylation site" description="N-linked (GlcNAc...) asparagine; by host" evidence="2">
    <location>
        <position position="285"/>
    </location>
</feature>
<feature type="glycosylation site" description="N-linked (GlcNAc...) asparagine; by host" evidence="2">
    <location>
        <position position="289"/>
    </location>
</feature>
<feature type="glycosylation site" description="N-linked (GlcNAc...) asparagine; by host" evidence="2">
    <location>
        <position position="297"/>
    </location>
</feature>
<feature type="glycosylation site" description="N-linked (GlcNAc...) asparagine; by host" evidence="2">
    <location>
        <position position="329"/>
    </location>
</feature>
<feature type="glycosylation site" description="N-linked (GlcNAc...) asparagine; by host" evidence="2">
    <location>
        <position position="345"/>
    </location>
</feature>
<feature type="glycosylation site" description="N-linked (GlcNAc...) asparagine; by host" evidence="2">
    <location>
        <position position="352"/>
    </location>
</feature>
<feature type="glycosylation site" description="N-linked (GlcNAc...) asparagine; by host" evidence="2">
    <location>
        <position position="384"/>
    </location>
</feature>
<feature type="glycosylation site" description="N-linked (GlcNAc...) asparagine; by host" evidence="2">
    <location>
        <position position="387"/>
    </location>
</feature>
<feature type="glycosylation site" description="N-linked (GlcNAc...) asparagine; by host" evidence="2">
    <location>
        <position position="395"/>
    </location>
</feature>
<feature type="glycosylation site" description="N-linked (GlcNAc...) asparagine; by host" evidence="2">
    <location>
        <position position="398"/>
    </location>
</feature>
<feature type="glycosylation site" description="N-linked (GlcNAc...) asparagine; by host" evidence="2">
    <location>
        <position position="438"/>
    </location>
</feature>
<feature type="glycosylation site" description="N-linked (GlcNAc...) asparagine; by host" evidence="2">
    <location>
        <position position="451"/>
    </location>
</feature>
<feature type="glycosylation site" description="N-linked (GlcNAc...) asparagine; by host" evidence="2">
    <location>
        <position position="496"/>
    </location>
</feature>
<feature type="glycosylation site" description="N-linked (GlcNAc...) asparagine; by host" evidence="2">
    <location>
        <position position="602"/>
    </location>
</feature>
<feature type="glycosylation site" description="N-linked (GlcNAc...) asparagine; by host" evidence="2">
    <location>
        <position position="613"/>
    </location>
</feature>
<feature type="glycosylation site" description="N-linked (GlcNAc...) asparagine; by host" evidence="2">
    <location>
        <position position="626"/>
    </location>
</feature>
<feature type="glycosylation site" description="N-linked (GlcNAc...) asparagine; by host" evidence="2">
    <location>
        <position position="638"/>
    </location>
</feature>
<feature type="disulfide bond" evidence="1">
    <location>
        <begin position="43"/>
        <end position="63"/>
    </location>
</feature>
<feature type="disulfide bond" evidence="1">
    <location>
        <begin position="108"/>
        <end position="202"/>
    </location>
</feature>
<feature type="disulfide bond" evidence="1">
    <location>
        <begin position="115"/>
        <end position="193"/>
    </location>
</feature>
<feature type="disulfide bond" evidence="1">
    <location>
        <begin position="120"/>
        <end position="154"/>
    </location>
</feature>
<feature type="disulfide bond" evidence="1">
    <location>
        <begin position="215"/>
        <end position="244"/>
    </location>
</feature>
<feature type="disulfide bond" evidence="1">
    <location>
        <begin position="225"/>
        <end position="236"/>
    </location>
</feature>
<feature type="disulfide bond" evidence="1">
    <location>
        <begin position="292"/>
        <end position="326"/>
    </location>
</feature>
<feature type="disulfide bond" evidence="1">
    <location>
        <begin position="376"/>
        <end position="435"/>
    </location>
</feature>
<feature type="disulfide bond" evidence="1">
    <location>
        <begin position="383"/>
        <end position="408"/>
    </location>
</feature>
<reference key="1">
    <citation type="journal article" date="2003" name="J. Virol.">
        <title>Amplification of a complete simian immunodeficiency virus genome from fecal RNA of a wild chimpanzee.</title>
        <authorList>
            <person name="Santiago M.L."/>
            <person name="Bibollet-Ruche F."/>
            <person name="Bailes E."/>
            <person name="Kamenya S."/>
            <person name="Muller M.N."/>
            <person name="Lukasik M."/>
            <person name="Pusey A.E."/>
            <person name="Collins D.A."/>
            <person name="Wrangham R.W."/>
            <person name="Goodall J."/>
            <person name="Shaw G.M."/>
            <person name="Sharp P.M."/>
            <person name="Hahn B.H."/>
        </authorList>
    </citation>
    <scope>NUCLEOTIDE SEQUENCE [GENOMIC RNA]</scope>
</reference>
<evidence type="ECO:0000250" key="1"/>
<evidence type="ECO:0000255" key="2"/>
<evidence type="ECO:0000305" key="3"/>
<sequence length="871" mass="99210">MKNLIGITLILIITILGIGFSTYYTTVFYGVPVWKEAQPTLFCASDADITSRDKHNIWATHNCVPLDPNPYEVTLANVSIRFNMEENYMVQEMKEDILSLFQQSFKPCVKLTPFCIKMTCTMTNTTNKTLNSATTTLTPTVNLSSIPNYEVYNCSFNQTTEFRDKKKQIYSLFYREDIVKEDGNNNSYYLHNCNTSVITQECDKSTFEPIPIRYCAPAGFALLKCRDQNFTGKGQCSNVSVVHCTHGIYPMIATALHLNGSLEEEETKAYFVNTSVNTPLLVKFNVSINLTCERTGNNTRGQVQIGPGMTFYNIENVVGDTRKAYCSVNATTWYRNLDWAMAAINTTMRARNETVQQTFQWQRDGDPEVTSFWFNCQGEFFYCNLTNWTNTWTANRTNNTHGTLVAPCRLRQIVNHWGIVSKGVYLPPRRGTVKCHSNITGLIMTAEKDNNNSYTPQFSAVVEDYWKVELARYKVVEIQPLSVAPRPGKRPEIKANHTRSRRDVGIGLLFLGFLSAAGSTMGAASIALTAQARGLLSGIVQQQQNLLQAIEAQQHLLQLSVWGIKQLQARMLAVEKYIRDQQLLSLWGCANKLVCHSSVPWNLTWAEDSTKCNHSDAKYYDCIWNNLTWQEWDRLVENSTGTIYSLLEKAQTQQEKNKQELLELDKWSSLWDWFDITQWLWYIKIAIIIVAGLVGLRILMFIVNVVKQVRQGYTPLFSQIPTQAEQDPEQPGGIAGGGGGRDNIRWTPSPAGFFSIVWEDLRNLLIWIYQTFQNFIWILWISLQALKQGIISLAHSLVIVHRTIIVGVRQIIEWSSNTYASLRVLLIQAIDRLANFTGWWTDLIIEGVVYIARGIRNIPRRIRQGLELALN</sequence>
<comment type="function">
    <text evidence="1">The surface protein gp120 (SU) attaches the virus to the host lymphoid cell by binding to the primary receptor CD4. This interaction induces a structural rearrangement creating a high affinity binding site for a chemokine coreceptor like CCR5. This peculiar 2 stage receptor-interaction strategy allows gp120 to maintain the highly conserved coreceptor-binding site in a cryptic conformation, protected from neutralizing antibodies. These changes are transmitted to the transmembrane protein gp41 and are thought to activate its fusogenic potential by unmasking its fusion peptide (By similarity).</text>
</comment>
<comment type="function">
    <text evidence="1">Surface protein gp120 (SU) may target the virus to gut-associated lymphoid tissue (GALT) by binding host ITGA4/ITGB7 (alpha-4/beta-7 integrins), a complex that mediates T-cell migration to the GALT. Interaction between gp120 and ITGA4/ITGB7 would allow the virus to enter GALT early in the infection, infecting and killing most of GALT's resting CD4+ T-cells. This T-cell depletion is believed to be the major insult to the host immune system leading to AIDS (By similarity).</text>
</comment>
<comment type="function">
    <text evidence="1">The surface protein gp120 is a ligand for CD209/DC-SIGN and CLEC4M/DC-SIGNR, which are respectively found on dendritic cells (DCs), and on endothelial cells of liver sinusoids and lymph node sinuses. These interactions allow capture of viral particles at mucosal surfaces by these cells and subsequent transmission to permissive cells. DCs are professional antigen presenting cells, critical for host immunity by inducing specific immune responses against a broad variety of pathogens. They act as sentinels in various tissues where they take up antigen, process it, and present it to T-cells following migration to lymphoid organs. SIV subverts the migration properties of dendritic cells to gain access to CD4+ T-cells in lymph nodes. Virus transmission to permissive T-cells occurs either in trans (without DCs infection, through viral capture and transmission), or in cis (following DCs productive infection, through the usual CD4-gp120 interaction), thereby inducing a robust infection. In trans infection, bound virions remain infectious over days and it is proposed that they are not degraded, but protected in non-lysosomal acidic organelles within the DCs close to the cell membrane thus contributing to the viral infectious potential during DCs' migration from the periphery to the lymphoid tissues. On arrival at lymphoid tissues, intact virions recycle back to DCs' cell surface allowing virus transmission to CD4+ T-cells. Virion capture also seems to lead to MHC-II-restricted viral antigen presentation, and probably to the activation of SIV-specific CD4+ cells (By similarity).</text>
</comment>
<comment type="function">
    <text evidence="1">The transmembrane protein gp41 (TM) acts as a class I viral fusion protein. Under the current model, the protein has at least 3 conformational states: pre-fusion native state, pre-hairpin intermediate state, and post-fusion hairpin state. During fusion of viral and target intracellular membranes, the coiled coil regions (heptad repeats) assume a trimer-of-hairpins structure, positioning the fusion peptide in close proximity to the C-terminal region of the ectodomain. The formation of this structure appears to drive apposition and subsequent fusion of viral and target cell membranes. Complete fusion occurs in host cell endosomes. The virus undergoes clathrin-dependent internalization long before endosomal fusion, thus minimizing the surface exposure of conserved viral epitopes during fusion and reducing the efficacy of inhibitors targeting these epitopes. Membranes fusion leads to delivery of the nucleocapsid into the cytoplasm (By similarity).</text>
</comment>
<comment type="function">
    <text evidence="1">The envelope glycoprotein gp160 precursor down-modulates cell surface CD4 antigen by interacting with it in the endoplasmic reticulum and blocking its transport to the cell surface.</text>
</comment>
<comment type="function">
    <text evidence="1">The gp120-gp41 heterodimer allows rapid transcytosis of the virus through CD4 negative cells such as simple epithelial monolayers of the intestinal, rectal and endocervical epithelial barriers. Both gp120 and gp41 specifically recognize glycosphingolipids galactosyl-ceramide (GalCer) or 3' sulfo-galactosyl-ceramide (GalS) present in the lipid rafts structures of epithelial cells. Binding to these alternative receptors allows the rapid transcytosis of the virus through the epithelial cells. This transcytotic vesicle-mediated transport of virions from the apical side to the basolateral side of the epithelial cells does not involve infection of the cells themselves (By similarity).</text>
</comment>
<comment type="subunit">
    <molecule>Surface protein gp120</molecule>
    <text evidence="1">The mature envelope protein (Env) consists of a homotrimer of non-covalently associated gp120-gp41 heterodimers. The resulting complex protrudes from the virus surface as a spike. Interacts with host CD4 and CCR5 (By similarity). Gp120 also interacts with the C-type lectins CD209/DC-SIGN and CLEC4M/DC-SIGNR (collectively referred to as DC-SIGN(R)).</text>
</comment>
<comment type="subunit">
    <molecule>Transmembrane protein gp41</molecule>
    <text evidence="1">The mature envelope protein (Env) consists of a homotrimer of non-covalently associated gp120-gp41 heterodimers. The resulting complex protrudes from the virus surface as a spike.</text>
</comment>
<comment type="subcellular location">
    <molecule>Transmembrane protein gp41</molecule>
    <subcellularLocation>
        <location evidence="1">Virion membrane</location>
        <topology evidence="1">Single-pass type I membrane protein</topology>
    </subcellularLocation>
    <subcellularLocation>
        <location evidence="1">Host cell membrane</location>
        <topology evidence="1">Single-pass type I membrane protein</topology>
    </subcellularLocation>
    <subcellularLocation>
        <location evidence="3">Host endosome membrane</location>
        <topology evidence="3">Single-pass type I membrane protein</topology>
    </subcellularLocation>
    <text evidence="1">It is probably concentrated at the site of budding and incorporated into the virions possibly by contacts between the cytoplasmic tail of Env and the N-terminus of Gag.</text>
</comment>
<comment type="subcellular location">
    <molecule>Surface protein gp120</molecule>
    <subcellularLocation>
        <location evidence="1">Virion membrane</location>
        <topology evidence="1">Peripheral membrane protein</topology>
    </subcellularLocation>
    <subcellularLocation>
        <location evidence="1">Host cell membrane</location>
        <topology evidence="1">Peripheral membrane protein</topology>
    </subcellularLocation>
    <subcellularLocation>
        <location evidence="3">Host endosome membrane</location>
        <topology evidence="3">Peripheral membrane protein</topology>
    </subcellularLocation>
    <text evidence="1">The surface protein is not anchored to the viral envelope, but associates with the extravirion surface through its binding to TM. It is probably concentrated at the site of budding and incorporated into the virions possibly by contacts between the cytoplasmic tail of Env and the N-terminus of Gag (By similarity).</text>
</comment>
<comment type="domain">
    <text evidence="1">Some of the most genetically diverse regions of the viral genome are present in Env. They are called variable regions 1 through 5 (V1 through V5) (By similarity).</text>
</comment>
<comment type="domain">
    <text evidence="1">The 17 amino acids long immunosuppressive region is present in many retroviral envelope proteins. Synthetic peptides derived from this relatively conserved sequence inhibit immune function in vitro and in vivo (By similarity).</text>
</comment>
<comment type="domain">
    <text evidence="1">The YXXL motif is involved in determining the exact site of viral release at the surface of infected mononuclear cells and promotes endocytosis.</text>
</comment>
<comment type="PTM">
    <text evidence="1">Specific enzymatic cleavages in vivo yield mature proteins. Envelope glycoproteins are synthesized as an inactive precursor that is heavily N-glycosylated and processed likely by host cell furin in the Golgi to yield the mature SU and TM proteins. The cleavage site between SU and TM requires the minimal sequence [KR]-X-[KR]-R (By similarity).</text>
</comment>
<proteinExistence type="inferred from homology"/>
<organism>
    <name type="scientific">Simian immunodeficiency virus (isolate TAN1)</name>
    <name type="common">SIV-cpz</name>
    <name type="synonym">Chimpanzee immunodeficiency virus</name>
    <dbReference type="NCBI Taxonomy" id="388910"/>
    <lineage>
        <taxon>Viruses</taxon>
        <taxon>Riboviria</taxon>
        <taxon>Pararnavirae</taxon>
        <taxon>Artverviricota</taxon>
        <taxon>Revtraviricetes</taxon>
        <taxon>Ortervirales</taxon>
        <taxon>Retroviridae</taxon>
        <taxon>Orthoretrovirinae</taxon>
        <taxon>Lentivirus</taxon>
        <taxon>Simian immunodeficiency virus</taxon>
    </lineage>
</organism>
<dbReference type="EMBL" id="AF447763">
    <property type="protein sequence ID" value="AAO13966.1"/>
    <property type="molecule type" value="Genomic_RNA"/>
</dbReference>
<dbReference type="SMR" id="Q8AIH5"/>
<dbReference type="Proteomes" id="UP000007222">
    <property type="component" value="Segment"/>
</dbReference>
<dbReference type="GO" id="GO:0044175">
    <property type="term" value="C:host cell endosome membrane"/>
    <property type="evidence" value="ECO:0007669"/>
    <property type="project" value="UniProtKB-SubCell"/>
</dbReference>
<dbReference type="GO" id="GO:0020002">
    <property type="term" value="C:host cell plasma membrane"/>
    <property type="evidence" value="ECO:0007669"/>
    <property type="project" value="UniProtKB-SubCell"/>
</dbReference>
<dbReference type="GO" id="GO:0016020">
    <property type="term" value="C:membrane"/>
    <property type="evidence" value="ECO:0007669"/>
    <property type="project" value="UniProtKB-KW"/>
</dbReference>
<dbReference type="GO" id="GO:0019031">
    <property type="term" value="C:viral envelope"/>
    <property type="evidence" value="ECO:0007669"/>
    <property type="project" value="UniProtKB-KW"/>
</dbReference>
<dbReference type="GO" id="GO:0055036">
    <property type="term" value="C:virion membrane"/>
    <property type="evidence" value="ECO:0007669"/>
    <property type="project" value="UniProtKB-SubCell"/>
</dbReference>
<dbReference type="GO" id="GO:0005198">
    <property type="term" value="F:structural molecule activity"/>
    <property type="evidence" value="ECO:0007669"/>
    <property type="project" value="InterPro"/>
</dbReference>
<dbReference type="GO" id="GO:0039663">
    <property type="term" value="P:membrane fusion involved in viral entry into host cell"/>
    <property type="evidence" value="ECO:0007669"/>
    <property type="project" value="UniProtKB-KW"/>
</dbReference>
<dbReference type="GO" id="GO:0046718">
    <property type="term" value="P:symbiont entry into host cell"/>
    <property type="evidence" value="ECO:0007669"/>
    <property type="project" value="UniProtKB-KW"/>
</dbReference>
<dbReference type="GO" id="GO:0019062">
    <property type="term" value="P:virion attachment to host cell"/>
    <property type="evidence" value="ECO:0007669"/>
    <property type="project" value="UniProtKB-KW"/>
</dbReference>
<dbReference type="CDD" id="cd09909">
    <property type="entry name" value="HIV-1-like_HR1-HR2"/>
    <property type="match status" value="1"/>
</dbReference>
<dbReference type="FunFam" id="1.10.287.210:FF:000001">
    <property type="entry name" value="Envelope glycoprotein gp160"/>
    <property type="match status" value="1"/>
</dbReference>
<dbReference type="Gene3D" id="1.10.287.210">
    <property type="match status" value="1"/>
</dbReference>
<dbReference type="Gene3D" id="2.170.40.20">
    <property type="entry name" value="Human immunodeficiency virus 1, Gp160, envelope glycoprotein"/>
    <property type="match status" value="2"/>
</dbReference>
<dbReference type="Gene3D" id="1.20.5.490">
    <property type="entry name" value="Single helix bin"/>
    <property type="match status" value="1"/>
</dbReference>
<dbReference type="InterPro" id="IPR036377">
    <property type="entry name" value="Gp120_core_sf"/>
</dbReference>
<dbReference type="InterPro" id="IPR000328">
    <property type="entry name" value="GP41-like"/>
</dbReference>
<dbReference type="InterPro" id="IPR000777">
    <property type="entry name" value="HIV1_Gp120"/>
</dbReference>
<dbReference type="Pfam" id="PF00516">
    <property type="entry name" value="GP120"/>
    <property type="match status" value="1"/>
</dbReference>
<dbReference type="Pfam" id="PF00517">
    <property type="entry name" value="GP41"/>
    <property type="match status" value="1"/>
</dbReference>
<dbReference type="SUPFAM" id="SSF56502">
    <property type="entry name" value="gp120 core"/>
    <property type="match status" value="2"/>
</dbReference>
<dbReference type="SUPFAM" id="SSF58069">
    <property type="entry name" value="Virus ectodomain"/>
    <property type="match status" value="1"/>
</dbReference>
<organismHost>
    <name type="scientific">Pan troglodytes</name>
    <name type="common">Chimpanzee</name>
    <dbReference type="NCBI Taxonomy" id="9598"/>
</organismHost>